<proteinExistence type="inferred from homology"/>
<accession>Q4KJL8</accession>
<gene>
    <name evidence="1" type="primary">tatB</name>
    <name type="ordered locus">PFL_0421</name>
</gene>
<reference key="1">
    <citation type="journal article" date="2005" name="Nat. Biotechnol.">
        <title>Complete genome sequence of the plant commensal Pseudomonas fluorescens Pf-5.</title>
        <authorList>
            <person name="Paulsen I.T."/>
            <person name="Press C.M."/>
            <person name="Ravel J."/>
            <person name="Kobayashi D.Y."/>
            <person name="Myers G.S.A."/>
            <person name="Mavrodi D.V."/>
            <person name="DeBoy R.T."/>
            <person name="Seshadri R."/>
            <person name="Ren Q."/>
            <person name="Madupu R."/>
            <person name="Dodson R.J."/>
            <person name="Durkin A.S."/>
            <person name="Brinkac L.M."/>
            <person name="Daugherty S.C."/>
            <person name="Sullivan S.A."/>
            <person name="Rosovitz M.J."/>
            <person name="Gwinn M.L."/>
            <person name="Zhou L."/>
            <person name="Schneider D.J."/>
            <person name="Cartinhour S.W."/>
            <person name="Nelson W.C."/>
            <person name="Weidman J."/>
            <person name="Watkins K."/>
            <person name="Tran K."/>
            <person name="Khouri H."/>
            <person name="Pierson E.A."/>
            <person name="Pierson L.S. III"/>
            <person name="Thomashow L.S."/>
            <person name="Loper J.E."/>
        </authorList>
    </citation>
    <scope>NUCLEOTIDE SEQUENCE [LARGE SCALE GENOMIC DNA]</scope>
    <source>
        <strain>ATCC BAA-477 / NRRL B-23932 / Pf-5</strain>
    </source>
</reference>
<comment type="function">
    <text evidence="1">Part of the twin-arginine translocation (Tat) system that transports large folded proteins containing a characteristic twin-arginine motif in their signal peptide across membranes. Together with TatC, TatB is part of a receptor directly interacting with Tat signal peptides. TatB may form an oligomeric binding site that transiently accommodates folded Tat precursor proteins before their translocation.</text>
</comment>
<comment type="subunit">
    <text evidence="1">The Tat system comprises two distinct complexes: a TatABC complex, containing multiple copies of TatA, TatB and TatC subunits, and a separate TatA complex, containing only TatA subunits. Substrates initially bind to the TatABC complex, which probably triggers association of the separate TatA complex to form the active translocon.</text>
</comment>
<comment type="subcellular location">
    <subcellularLocation>
        <location evidence="1">Cell inner membrane</location>
        <topology evidence="1">Single-pass membrane protein</topology>
    </subcellularLocation>
</comment>
<comment type="similarity">
    <text evidence="1">Belongs to the TatB family.</text>
</comment>
<protein>
    <recommendedName>
        <fullName evidence="1">Sec-independent protein translocase protein TatB</fullName>
    </recommendedName>
</protein>
<keyword id="KW-0997">Cell inner membrane</keyword>
<keyword id="KW-1003">Cell membrane</keyword>
<keyword id="KW-0472">Membrane</keyword>
<keyword id="KW-0653">Protein transport</keyword>
<keyword id="KW-0811">Translocation</keyword>
<keyword id="KW-0812">Transmembrane</keyword>
<keyword id="KW-1133">Transmembrane helix</keyword>
<keyword id="KW-0813">Transport</keyword>
<name>TATB_PSEF5</name>
<organism>
    <name type="scientific">Pseudomonas fluorescens (strain ATCC BAA-477 / NRRL B-23932 / Pf-5)</name>
    <dbReference type="NCBI Taxonomy" id="220664"/>
    <lineage>
        <taxon>Bacteria</taxon>
        <taxon>Pseudomonadati</taxon>
        <taxon>Pseudomonadota</taxon>
        <taxon>Gammaproteobacteria</taxon>
        <taxon>Pseudomonadales</taxon>
        <taxon>Pseudomonadaceae</taxon>
        <taxon>Pseudomonas</taxon>
    </lineage>
</organism>
<feature type="chain" id="PRO_0000301208" description="Sec-independent protein translocase protein TatB">
    <location>
        <begin position="1"/>
        <end position="152"/>
    </location>
</feature>
<feature type="transmembrane region" description="Helical" evidence="1">
    <location>
        <begin position="1"/>
        <end position="21"/>
    </location>
</feature>
<feature type="region of interest" description="Disordered" evidence="2">
    <location>
        <begin position="98"/>
        <end position="152"/>
    </location>
</feature>
<feature type="compositionally biased region" description="Low complexity" evidence="2">
    <location>
        <begin position="98"/>
        <end position="115"/>
    </location>
</feature>
<feature type="compositionally biased region" description="Pro residues" evidence="2">
    <location>
        <begin position="116"/>
        <end position="127"/>
    </location>
</feature>
<feature type="compositionally biased region" description="Low complexity" evidence="2">
    <location>
        <begin position="128"/>
        <end position="142"/>
    </location>
</feature>
<sequence>MFGISFSELLLVGLVALLVLGPERLPGAARTAGLWVGRLKRSFNAIKQEVEREIGADEIRRQLHNEHILSLEQEARKILAPTQQQPTPVEPVAEQTIHAPGAATVAEAPPASEVPAPLPSTPAPAPTAEPAAPVATPATTAPHDSTLPPRAP</sequence>
<dbReference type="EMBL" id="CP000076">
    <property type="protein sequence ID" value="AAY95830.1"/>
    <property type="molecule type" value="Genomic_DNA"/>
</dbReference>
<dbReference type="RefSeq" id="WP_011058796.1">
    <property type="nucleotide sequence ID" value="NC_004129.6"/>
</dbReference>
<dbReference type="SMR" id="Q4KJL8"/>
<dbReference type="STRING" id="220664.PFL_0421"/>
<dbReference type="GeneID" id="57473410"/>
<dbReference type="KEGG" id="pfl:PFL_0421"/>
<dbReference type="PATRIC" id="fig|220664.5.peg.430"/>
<dbReference type="eggNOG" id="COG1826">
    <property type="taxonomic scope" value="Bacteria"/>
</dbReference>
<dbReference type="HOGENOM" id="CLU_086034_1_1_6"/>
<dbReference type="Proteomes" id="UP000008540">
    <property type="component" value="Chromosome"/>
</dbReference>
<dbReference type="GO" id="GO:0033281">
    <property type="term" value="C:TAT protein transport complex"/>
    <property type="evidence" value="ECO:0007669"/>
    <property type="project" value="UniProtKB-UniRule"/>
</dbReference>
<dbReference type="GO" id="GO:0008320">
    <property type="term" value="F:protein transmembrane transporter activity"/>
    <property type="evidence" value="ECO:0007669"/>
    <property type="project" value="UniProtKB-UniRule"/>
</dbReference>
<dbReference type="GO" id="GO:0043953">
    <property type="term" value="P:protein transport by the Tat complex"/>
    <property type="evidence" value="ECO:0007669"/>
    <property type="project" value="UniProtKB-UniRule"/>
</dbReference>
<dbReference type="Gene3D" id="1.20.5.3310">
    <property type="match status" value="1"/>
</dbReference>
<dbReference type="HAMAP" id="MF_00237">
    <property type="entry name" value="TatB"/>
    <property type="match status" value="1"/>
</dbReference>
<dbReference type="InterPro" id="IPR003369">
    <property type="entry name" value="TatA/B/E"/>
</dbReference>
<dbReference type="InterPro" id="IPR018448">
    <property type="entry name" value="TatB"/>
</dbReference>
<dbReference type="NCBIfam" id="TIGR01410">
    <property type="entry name" value="tatB"/>
    <property type="match status" value="1"/>
</dbReference>
<dbReference type="PANTHER" id="PTHR33162">
    <property type="entry name" value="SEC-INDEPENDENT PROTEIN TRANSLOCASE PROTEIN TATA, CHLOROPLASTIC"/>
    <property type="match status" value="1"/>
</dbReference>
<dbReference type="PANTHER" id="PTHR33162:SF1">
    <property type="entry name" value="SEC-INDEPENDENT PROTEIN TRANSLOCASE PROTEIN TATA, CHLOROPLASTIC"/>
    <property type="match status" value="1"/>
</dbReference>
<dbReference type="Pfam" id="PF02416">
    <property type="entry name" value="TatA_B_E"/>
    <property type="match status" value="1"/>
</dbReference>
<dbReference type="PRINTS" id="PR01506">
    <property type="entry name" value="TATBPROTEIN"/>
</dbReference>
<evidence type="ECO:0000255" key="1">
    <source>
        <dbReference type="HAMAP-Rule" id="MF_00237"/>
    </source>
</evidence>
<evidence type="ECO:0000256" key="2">
    <source>
        <dbReference type="SAM" id="MobiDB-lite"/>
    </source>
</evidence>